<organism>
    <name type="scientific">Bos taurus</name>
    <name type="common">Bovine</name>
    <dbReference type="NCBI Taxonomy" id="9913"/>
    <lineage>
        <taxon>Eukaryota</taxon>
        <taxon>Metazoa</taxon>
        <taxon>Chordata</taxon>
        <taxon>Craniata</taxon>
        <taxon>Vertebrata</taxon>
        <taxon>Euteleostomi</taxon>
        <taxon>Mammalia</taxon>
        <taxon>Eutheria</taxon>
        <taxon>Laurasiatheria</taxon>
        <taxon>Artiodactyla</taxon>
        <taxon>Ruminantia</taxon>
        <taxon>Pecora</taxon>
        <taxon>Bovidae</taxon>
        <taxon>Bovinae</taxon>
        <taxon>Bos</taxon>
    </lineage>
</organism>
<proteinExistence type="evidence at transcript level"/>
<comment type="subunit">
    <text evidence="3">May interact with CSPP1.</text>
</comment>
<comment type="subcellular location">
    <subcellularLocation>
        <location>Cytoplasm</location>
    </subcellularLocation>
    <subcellularLocation>
        <location>Cytoplasm</location>
        <location>Cytoskeleton</location>
        <location>Microtubule organizing center</location>
        <location>Centrosome</location>
    </subcellularLocation>
    <subcellularLocation>
        <location>Cytoplasm</location>
        <location>Cytoskeleton</location>
        <location>Spindle pole</location>
    </subcellularLocation>
    <text evidence="1">Distributed throughout the cytoplasm during mitosis, accumulating at spindle poles.</text>
</comment>
<comment type="similarity">
    <text evidence="3">Belongs to the FAM110 family.</text>
</comment>
<dbReference type="EMBL" id="BT021595">
    <property type="protein sequence ID" value="AAX46442.1"/>
    <property type="molecule type" value="mRNA"/>
</dbReference>
<dbReference type="EMBL" id="BT021632">
    <property type="protein sequence ID" value="AAX46479.1"/>
    <property type="molecule type" value="mRNA"/>
</dbReference>
<dbReference type="EMBL" id="BC114875">
    <property type="protein sequence ID" value="AAI14876.1"/>
    <property type="molecule type" value="mRNA"/>
</dbReference>
<dbReference type="RefSeq" id="NP_001014961.1">
    <property type="nucleotide sequence ID" value="NM_001014961.1"/>
</dbReference>
<dbReference type="RefSeq" id="XP_005214878.1">
    <property type="nucleotide sequence ID" value="XM_005214821.5"/>
</dbReference>
<dbReference type="RefSeq" id="XP_005214879.1">
    <property type="nucleotide sequence ID" value="XM_005214822.5"/>
</dbReference>
<dbReference type="RefSeq" id="XP_010809818.1">
    <property type="nucleotide sequence ID" value="XM_010811516.4"/>
</dbReference>
<dbReference type="RefSeq" id="XP_024856539.1">
    <property type="nucleotide sequence ID" value="XM_025000771.2"/>
</dbReference>
<dbReference type="RefSeq" id="XP_059748704.1">
    <property type="nucleotide sequence ID" value="XM_059892721.1"/>
</dbReference>
<dbReference type="FunCoup" id="Q58DG5">
    <property type="interactions" value="315"/>
</dbReference>
<dbReference type="STRING" id="9913.ENSBTAP00000011392"/>
<dbReference type="PaxDb" id="9913-ENSBTAP00000011392"/>
<dbReference type="Ensembl" id="ENSBTAT00000104118.1">
    <property type="protein sequence ID" value="ENSBTAP00000092814.1"/>
    <property type="gene ID" value="ENSBTAG00000008638.6"/>
</dbReference>
<dbReference type="Ensembl" id="ENSBTAT00000111251.1">
    <property type="protein sequence ID" value="ENSBTAP00000084379.1"/>
    <property type="gene ID" value="ENSBTAG00000008638.6"/>
</dbReference>
<dbReference type="GeneID" id="540118"/>
<dbReference type="KEGG" id="bta:540118"/>
<dbReference type="CTD" id="83541"/>
<dbReference type="VEuPathDB" id="HostDB:ENSBTAG00000008638"/>
<dbReference type="VGNC" id="VGNC:28716">
    <property type="gene designation" value="FAM110A"/>
</dbReference>
<dbReference type="eggNOG" id="ENOG502R37V">
    <property type="taxonomic scope" value="Eukaryota"/>
</dbReference>
<dbReference type="GeneTree" id="ENSGT00950000183056"/>
<dbReference type="HOGENOM" id="CLU_050540_0_0_1"/>
<dbReference type="InParanoid" id="Q58DG5"/>
<dbReference type="OMA" id="GCRPHLD"/>
<dbReference type="OrthoDB" id="10028183at2759"/>
<dbReference type="TreeFam" id="TF330964"/>
<dbReference type="Proteomes" id="UP000009136">
    <property type="component" value="Chromosome 13"/>
</dbReference>
<dbReference type="Bgee" id="ENSBTAG00000008638">
    <property type="expression patterns" value="Expressed in surface of tongue and 102 other cell types or tissues"/>
</dbReference>
<dbReference type="GO" id="GO:0005813">
    <property type="term" value="C:centrosome"/>
    <property type="evidence" value="ECO:0007669"/>
    <property type="project" value="UniProtKB-SubCell"/>
</dbReference>
<dbReference type="GO" id="GO:0005737">
    <property type="term" value="C:cytoplasm"/>
    <property type="evidence" value="ECO:0007669"/>
    <property type="project" value="UniProtKB-SubCell"/>
</dbReference>
<dbReference type="GO" id="GO:0000922">
    <property type="term" value="C:spindle pole"/>
    <property type="evidence" value="ECO:0007669"/>
    <property type="project" value="UniProtKB-SubCell"/>
</dbReference>
<dbReference type="InterPro" id="IPR025740">
    <property type="entry name" value="FAM110"/>
</dbReference>
<dbReference type="InterPro" id="IPR025741">
    <property type="entry name" value="FAM110_C"/>
</dbReference>
<dbReference type="InterPro" id="IPR025739">
    <property type="entry name" value="FAM110_N"/>
</dbReference>
<dbReference type="PANTHER" id="PTHR14758">
    <property type="entry name" value="AGAP005440-PA"/>
    <property type="match status" value="1"/>
</dbReference>
<dbReference type="PANTHER" id="PTHR14758:SF4">
    <property type="entry name" value="PROTEIN FAM110A"/>
    <property type="match status" value="1"/>
</dbReference>
<dbReference type="Pfam" id="PF14160">
    <property type="entry name" value="FAM110_C"/>
    <property type="match status" value="1"/>
</dbReference>
<dbReference type="Pfam" id="PF14161">
    <property type="entry name" value="FAM110_N"/>
    <property type="match status" value="1"/>
</dbReference>
<gene>
    <name type="primary">FAM110A</name>
</gene>
<name>F110A_BOVIN</name>
<feature type="chain" id="PRO_0000246169" description="Protein FAM110A">
    <location>
        <begin position="1"/>
        <end position="295"/>
    </location>
</feature>
<feature type="region of interest" description="Disordered" evidence="2">
    <location>
        <begin position="117"/>
        <end position="148"/>
    </location>
</feature>
<feature type="region of interest" description="Disordered" evidence="2">
    <location>
        <begin position="160"/>
        <end position="191"/>
    </location>
</feature>
<feature type="compositionally biased region" description="Pro residues" evidence="2">
    <location>
        <begin position="138"/>
        <end position="147"/>
    </location>
</feature>
<feature type="compositionally biased region" description="Pro residues" evidence="2">
    <location>
        <begin position="160"/>
        <end position="171"/>
    </location>
</feature>
<accession>Q58DG5</accession>
<sequence length="295" mass="31475">MPVDTLTPGARDTPALPIRLRTKVPGYLLRRPADGGARKPSAVERLEADKAKYVKSLHVANTRQEPVQPLLCKQPLFSPGTRRTVLTPSRRALPGPGCRPQLDLDILSSLINLCDSPVSPAEASRTPGRAEGARQPPLATPPRPPPSIAAVRRVDVLPLPASPIQPCPSPGPAAASSPVRPPGLQRSKSDLSERFSRAAADLERFFNFCGLDPEEARGLGVAHLARASSDIVSLAGPSAGPASSEGGCSRRSSVTVEERARERVPYGVSVIERNARVIKWLYGLRQARETPAAEC</sequence>
<evidence type="ECO:0000250" key="1"/>
<evidence type="ECO:0000256" key="2">
    <source>
        <dbReference type="SAM" id="MobiDB-lite"/>
    </source>
</evidence>
<evidence type="ECO:0000305" key="3"/>
<reference key="1">
    <citation type="journal article" date="2005" name="BMC Genomics">
        <title>Characterization of 954 bovine full-CDS cDNA sequences.</title>
        <authorList>
            <person name="Harhay G.P."/>
            <person name="Sonstegard T.S."/>
            <person name="Keele J.W."/>
            <person name="Heaton M.P."/>
            <person name="Clawson M.L."/>
            <person name="Snelling W.M."/>
            <person name="Wiedmann R.T."/>
            <person name="Van Tassell C.P."/>
            <person name="Smith T.P.L."/>
        </authorList>
    </citation>
    <scope>NUCLEOTIDE SEQUENCE [LARGE SCALE MRNA]</scope>
</reference>
<reference key="2">
    <citation type="submission" date="2006-04" db="EMBL/GenBank/DDBJ databases">
        <authorList>
            <consortium name="NIH - Mammalian Gene Collection (MGC) project"/>
        </authorList>
    </citation>
    <scope>NUCLEOTIDE SEQUENCE [LARGE SCALE MRNA]</scope>
    <source>
        <strain>Hereford</strain>
        <tissue>Thymus</tissue>
    </source>
</reference>
<protein>
    <recommendedName>
        <fullName>Protein FAM110A</fullName>
    </recommendedName>
</protein>
<keyword id="KW-0963">Cytoplasm</keyword>
<keyword id="KW-0206">Cytoskeleton</keyword>
<keyword id="KW-1185">Reference proteome</keyword>